<evidence type="ECO:0000255" key="1">
    <source>
        <dbReference type="HAMAP-Rule" id="MF_00082"/>
    </source>
</evidence>
<gene>
    <name evidence="1" type="primary">argB</name>
    <name type="ordered locus">Amuc_1203</name>
</gene>
<organism>
    <name type="scientific">Akkermansia muciniphila (strain ATCC BAA-835 / DSM 22959 / JCM 33894 / BCRC 81048 / CCUG 64013 / CIP 107961 / Muc)</name>
    <dbReference type="NCBI Taxonomy" id="349741"/>
    <lineage>
        <taxon>Bacteria</taxon>
        <taxon>Pseudomonadati</taxon>
        <taxon>Verrucomicrobiota</taxon>
        <taxon>Verrucomicrobiia</taxon>
        <taxon>Verrucomicrobiales</taxon>
        <taxon>Akkermansiaceae</taxon>
        <taxon>Akkermansia</taxon>
    </lineage>
</organism>
<dbReference type="EC" id="2.7.2.8" evidence="1"/>
<dbReference type="EMBL" id="CP001071">
    <property type="protein sequence ID" value="ACD05028.1"/>
    <property type="molecule type" value="Genomic_DNA"/>
</dbReference>
<dbReference type="RefSeq" id="WP_012420243.1">
    <property type="nucleotide sequence ID" value="NZ_CP071807.1"/>
</dbReference>
<dbReference type="SMR" id="B2URE3"/>
<dbReference type="STRING" id="349741.Amuc_1203"/>
<dbReference type="PaxDb" id="349741-Amuc_1203"/>
<dbReference type="GeneID" id="60880679"/>
<dbReference type="KEGG" id="amu:Amuc_1203"/>
<dbReference type="eggNOG" id="COG0548">
    <property type="taxonomic scope" value="Bacteria"/>
</dbReference>
<dbReference type="HOGENOM" id="CLU_053680_1_0_0"/>
<dbReference type="OrthoDB" id="9803155at2"/>
<dbReference type="BioCyc" id="AMUC349741:G1GBX-1281-MONOMER"/>
<dbReference type="UniPathway" id="UPA00068">
    <property type="reaction ID" value="UER00107"/>
</dbReference>
<dbReference type="Proteomes" id="UP000001031">
    <property type="component" value="Chromosome"/>
</dbReference>
<dbReference type="GO" id="GO:0005737">
    <property type="term" value="C:cytoplasm"/>
    <property type="evidence" value="ECO:0007669"/>
    <property type="project" value="UniProtKB-SubCell"/>
</dbReference>
<dbReference type="GO" id="GO:0003991">
    <property type="term" value="F:acetylglutamate kinase activity"/>
    <property type="evidence" value="ECO:0007669"/>
    <property type="project" value="UniProtKB-UniRule"/>
</dbReference>
<dbReference type="GO" id="GO:0005524">
    <property type="term" value="F:ATP binding"/>
    <property type="evidence" value="ECO:0007669"/>
    <property type="project" value="UniProtKB-UniRule"/>
</dbReference>
<dbReference type="GO" id="GO:0042450">
    <property type="term" value="P:arginine biosynthetic process via ornithine"/>
    <property type="evidence" value="ECO:0007669"/>
    <property type="project" value="UniProtKB-UniRule"/>
</dbReference>
<dbReference type="GO" id="GO:0006526">
    <property type="term" value="P:L-arginine biosynthetic process"/>
    <property type="evidence" value="ECO:0007669"/>
    <property type="project" value="UniProtKB-UniPathway"/>
</dbReference>
<dbReference type="FunFam" id="3.40.1160.10:FF:000004">
    <property type="entry name" value="Acetylglutamate kinase"/>
    <property type="match status" value="1"/>
</dbReference>
<dbReference type="Gene3D" id="3.40.1160.10">
    <property type="entry name" value="Acetylglutamate kinase-like"/>
    <property type="match status" value="1"/>
</dbReference>
<dbReference type="HAMAP" id="MF_00082">
    <property type="entry name" value="ArgB"/>
    <property type="match status" value="1"/>
</dbReference>
<dbReference type="InterPro" id="IPR036393">
    <property type="entry name" value="AceGlu_kinase-like_sf"/>
</dbReference>
<dbReference type="InterPro" id="IPR004662">
    <property type="entry name" value="AcgluKinase_fam"/>
</dbReference>
<dbReference type="InterPro" id="IPR037528">
    <property type="entry name" value="ArgB"/>
</dbReference>
<dbReference type="InterPro" id="IPR001048">
    <property type="entry name" value="Asp/Glu/Uridylate_kinase"/>
</dbReference>
<dbReference type="NCBIfam" id="TIGR00761">
    <property type="entry name" value="argB"/>
    <property type="match status" value="1"/>
</dbReference>
<dbReference type="PANTHER" id="PTHR23342">
    <property type="entry name" value="N-ACETYLGLUTAMATE SYNTHASE"/>
    <property type="match status" value="1"/>
</dbReference>
<dbReference type="PANTHER" id="PTHR23342:SF0">
    <property type="entry name" value="N-ACETYLGLUTAMATE SYNTHASE, MITOCHONDRIAL"/>
    <property type="match status" value="1"/>
</dbReference>
<dbReference type="Pfam" id="PF00696">
    <property type="entry name" value="AA_kinase"/>
    <property type="match status" value="1"/>
</dbReference>
<dbReference type="PIRSF" id="PIRSF000728">
    <property type="entry name" value="NAGK"/>
    <property type="match status" value="1"/>
</dbReference>
<dbReference type="SUPFAM" id="SSF53633">
    <property type="entry name" value="Carbamate kinase-like"/>
    <property type="match status" value="1"/>
</dbReference>
<proteinExistence type="inferred from homology"/>
<keyword id="KW-0028">Amino-acid biosynthesis</keyword>
<keyword id="KW-0055">Arginine biosynthesis</keyword>
<keyword id="KW-0067">ATP-binding</keyword>
<keyword id="KW-0963">Cytoplasm</keyword>
<keyword id="KW-0418">Kinase</keyword>
<keyword id="KW-0547">Nucleotide-binding</keyword>
<keyword id="KW-1185">Reference proteome</keyword>
<keyword id="KW-0808">Transferase</keyword>
<name>ARGB_AKKM8</name>
<reference key="1">
    <citation type="journal article" date="2011" name="PLoS ONE">
        <title>The genome of Akkermansia muciniphila, a dedicated intestinal mucin degrader, and its use in exploring intestinal metagenomes.</title>
        <authorList>
            <person name="van Passel M.W."/>
            <person name="Kant R."/>
            <person name="Zoetendal E.G."/>
            <person name="Plugge C.M."/>
            <person name="Derrien M."/>
            <person name="Malfatti S.A."/>
            <person name="Chain P.S."/>
            <person name="Woyke T."/>
            <person name="Palva A."/>
            <person name="de Vos W.M."/>
            <person name="Smidt H."/>
        </authorList>
    </citation>
    <scope>NUCLEOTIDE SEQUENCE [LARGE SCALE GENOMIC DNA]</scope>
    <source>
        <strain>ATCC BAA-835 / DSM 22959 / JCM 33894 / BCRC 81048 / CCUG 64013 / CIP 107961 / Muc</strain>
    </source>
</reference>
<accession>B2URE3</accession>
<protein>
    <recommendedName>
        <fullName evidence="1">Acetylglutamate kinase</fullName>
        <ecNumber evidence="1">2.7.2.8</ecNumber>
    </recommendedName>
    <alternativeName>
        <fullName evidence="1">N-acetyl-L-glutamate 5-phosphotransferase</fullName>
    </alternativeName>
    <alternativeName>
        <fullName evidence="1">NAG kinase</fullName>
        <shortName evidence="1">NAGK</shortName>
    </alternativeName>
</protein>
<comment type="function">
    <text evidence="1">Catalyzes the ATP-dependent phosphorylation of N-acetyl-L-glutamate.</text>
</comment>
<comment type="catalytic activity">
    <reaction evidence="1">
        <text>N-acetyl-L-glutamate + ATP = N-acetyl-L-glutamyl 5-phosphate + ADP</text>
        <dbReference type="Rhea" id="RHEA:14629"/>
        <dbReference type="ChEBI" id="CHEBI:30616"/>
        <dbReference type="ChEBI" id="CHEBI:44337"/>
        <dbReference type="ChEBI" id="CHEBI:57936"/>
        <dbReference type="ChEBI" id="CHEBI:456216"/>
        <dbReference type="EC" id="2.7.2.8"/>
    </reaction>
</comment>
<comment type="pathway">
    <text evidence="1">Amino-acid biosynthesis; L-arginine biosynthesis; N(2)-acetyl-L-ornithine from L-glutamate: step 2/4.</text>
</comment>
<comment type="subcellular location">
    <subcellularLocation>
        <location evidence="1">Cytoplasm</location>
    </subcellularLocation>
</comment>
<comment type="similarity">
    <text evidence="1">Belongs to the acetylglutamate kinase family. ArgB subfamily.</text>
</comment>
<feature type="chain" id="PRO_1000202556" description="Acetylglutamate kinase">
    <location>
        <begin position="1"/>
        <end position="297"/>
    </location>
</feature>
<feature type="binding site" evidence="1">
    <location>
        <begin position="68"/>
        <end position="69"/>
    </location>
    <ligand>
        <name>substrate</name>
    </ligand>
</feature>
<feature type="binding site" evidence="1">
    <location>
        <position position="90"/>
    </location>
    <ligand>
        <name>substrate</name>
    </ligand>
</feature>
<feature type="binding site" evidence="1">
    <location>
        <position position="189"/>
    </location>
    <ligand>
        <name>substrate</name>
    </ligand>
</feature>
<feature type="site" description="Transition state stabilizer" evidence="1">
    <location>
        <position position="33"/>
    </location>
</feature>
<feature type="site" description="Transition state stabilizer" evidence="1">
    <location>
        <position position="252"/>
    </location>
</feature>
<sequence length="297" mass="31952">MDSKITRLIEQASVIVGALPYLQAYRDKTFLIKFGGSAMDDARLVKKLMRDIVLLEVLGFNPVIVHGGGKAISKAMAEAGLEARFVNGLRVTTPEAISIVERTLSGTINPGLVQMFRDYGGKGVGIPGTEIFVGERIHEKDEQGNPIDIGEVGNVIGCLTERITEALELQITPIVSPLAKELGTHKPLNVNADLAAAALAKELKPVKLIYISDVPGIMKDPSDPSTLIKSVTRTEALDLIKDGTVSGGMIPKIHSAIDALNAGVRKVHFIDGRLPHTLLLEIFTPDGIGTEIIREQR</sequence>